<feature type="chain" id="PRO_0000193434" description="Peptidyl-prolyl cis-trans isomerase ssp-1">
    <location>
        <begin position="1"/>
        <end position="182"/>
    </location>
</feature>
<feature type="domain" description="WW" evidence="1">
    <location>
        <begin position="7"/>
        <end position="41"/>
    </location>
</feature>
<feature type="domain" description="PpiC" evidence="2">
    <location>
        <begin position="71"/>
        <end position="182"/>
    </location>
</feature>
<feature type="sequence conflict" description="In Ref. 1; CAA06818." evidence="3" ref="1">
    <original>G</original>
    <variation>D</variation>
    <location>
        <position position="167"/>
    </location>
</feature>
<evidence type="ECO:0000255" key="1">
    <source>
        <dbReference type="PROSITE-ProRule" id="PRU00224"/>
    </source>
</evidence>
<evidence type="ECO:0000255" key="2">
    <source>
        <dbReference type="PROSITE-ProRule" id="PRU00278"/>
    </source>
</evidence>
<evidence type="ECO:0000305" key="3"/>
<keyword id="KW-0413">Isomerase</keyword>
<keyword id="KW-1185">Reference proteome</keyword>
<keyword id="KW-0697">Rotamase</keyword>
<sequence>MSNTIETGLPEDWEVRHSQSKNLPYYFNSATKTSRWEPPSGTDVDKLKIYMAKYHSPTSQQQQQQQQQQPQGKIRCAHLLVKHNQSRRPSSWRESEITRTKQEALTTLQGFEQRIKSGSISLGELALTESDCSSARKRGDLGYFGRGDMQKEFEDAAFALKPGEISGIVDTASGLHLIERLE</sequence>
<organism>
    <name type="scientific">Neurospora crassa (strain ATCC 24698 / 74-OR23-1A / CBS 708.71 / DSM 1257 / FGSC 987)</name>
    <dbReference type="NCBI Taxonomy" id="367110"/>
    <lineage>
        <taxon>Eukaryota</taxon>
        <taxon>Fungi</taxon>
        <taxon>Dikarya</taxon>
        <taxon>Ascomycota</taxon>
        <taxon>Pezizomycotina</taxon>
        <taxon>Sordariomycetes</taxon>
        <taxon>Sordariomycetidae</taxon>
        <taxon>Sordariales</taxon>
        <taxon>Sordariaceae</taxon>
        <taxon>Neurospora</taxon>
    </lineage>
</organism>
<reference key="1">
    <citation type="journal article" date="1998" name="J. Biol. Chem.">
        <title>Ssp1, a site specific parvulin homolog from N.crassa active in protein folding.</title>
        <authorList>
            <person name="Kops O."/>
            <person name="Eckerskorn C."/>
            <person name="Hottenrott S."/>
            <person name="Fischer G."/>
            <person name="Mi H."/>
            <person name="Tropschug M."/>
        </authorList>
    </citation>
    <scope>NUCLEOTIDE SEQUENCE [MRNA]</scope>
    <scope>CHARACTERIZATION</scope>
</reference>
<reference key="2">
    <citation type="journal article" date="2003" name="Nature">
        <title>The genome sequence of the filamentous fungus Neurospora crassa.</title>
        <authorList>
            <person name="Galagan J.E."/>
            <person name="Calvo S.E."/>
            <person name="Borkovich K.A."/>
            <person name="Selker E.U."/>
            <person name="Read N.D."/>
            <person name="Jaffe D.B."/>
            <person name="FitzHugh W."/>
            <person name="Ma L.-J."/>
            <person name="Smirnov S."/>
            <person name="Purcell S."/>
            <person name="Rehman B."/>
            <person name="Elkins T."/>
            <person name="Engels R."/>
            <person name="Wang S."/>
            <person name="Nielsen C.B."/>
            <person name="Butler J."/>
            <person name="Endrizzi M."/>
            <person name="Qui D."/>
            <person name="Ianakiev P."/>
            <person name="Bell-Pedersen D."/>
            <person name="Nelson M.A."/>
            <person name="Werner-Washburne M."/>
            <person name="Selitrennikoff C.P."/>
            <person name="Kinsey J.A."/>
            <person name="Braun E.L."/>
            <person name="Zelter A."/>
            <person name="Schulte U."/>
            <person name="Kothe G.O."/>
            <person name="Jedd G."/>
            <person name="Mewes H.-W."/>
            <person name="Staben C."/>
            <person name="Marcotte E."/>
            <person name="Greenberg D."/>
            <person name="Roy A."/>
            <person name="Foley K."/>
            <person name="Naylor J."/>
            <person name="Stange-Thomann N."/>
            <person name="Barrett R."/>
            <person name="Gnerre S."/>
            <person name="Kamal M."/>
            <person name="Kamvysselis M."/>
            <person name="Mauceli E.W."/>
            <person name="Bielke C."/>
            <person name="Rudd S."/>
            <person name="Frishman D."/>
            <person name="Krystofova S."/>
            <person name="Rasmussen C."/>
            <person name="Metzenberg R.L."/>
            <person name="Perkins D.D."/>
            <person name="Kroken S."/>
            <person name="Cogoni C."/>
            <person name="Macino G."/>
            <person name="Catcheside D.E.A."/>
            <person name="Li W."/>
            <person name="Pratt R.J."/>
            <person name="Osmani S.A."/>
            <person name="DeSouza C.P.C."/>
            <person name="Glass N.L."/>
            <person name="Orbach M.J."/>
            <person name="Berglund J.A."/>
            <person name="Voelker R."/>
            <person name="Yarden O."/>
            <person name="Plamann M."/>
            <person name="Seiler S."/>
            <person name="Dunlap J.C."/>
            <person name="Radford A."/>
            <person name="Aramayo R."/>
            <person name="Natvig D.O."/>
            <person name="Alex L.A."/>
            <person name="Mannhaupt G."/>
            <person name="Ebbole D.J."/>
            <person name="Freitag M."/>
            <person name="Paulsen I."/>
            <person name="Sachs M.S."/>
            <person name="Lander E.S."/>
            <person name="Nusbaum C."/>
            <person name="Birren B.W."/>
        </authorList>
    </citation>
    <scope>NUCLEOTIDE SEQUENCE [LARGE SCALE GENOMIC DNA]</scope>
    <source>
        <strain>ATCC 24698 / 74-OR23-1A / CBS 708.71 / DSM 1257 / FGSC 987</strain>
    </source>
</reference>
<comment type="function">
    <text>Site-specific PPIase with respect to the amino acid N-terminal to the proline residue. Peptides with glutamate, phosphoserine, or phosphothreonine in the -1 position are the best substrates. It is not only able to isomerize small peptides but is also active in protein folding.</text>
</comment>
<comment type="catalytic activity">
    <reaction>
        <text>[protein]-peptidylproline (omega=180) = [protein]-peptidylproline (omega=0)</text>
        <dbReference type="Rhea" id="RHEA:16237"/>
        <dbReference type="Rhea" id="RHEA-COMP:10747"/>
        <dbReference type="Rhea" id="RHEA-COMP:10748"/>
        <dbReference type="ChEBI" id="CHEBI:83833"/>
        <dbReference type="ChEBI" id="CHEBI:83834"/>
        <dbReference type="EC" id="5.2.1.8"/>
    </reaction>
</comment>
<proteinExistence type="evidence at protein level"/>
<gene>
    <name type="primary">ssp-1</name>
    <name type="ORF">NCU08554</name>
</gene>
<name>SSP1_NEUCR</name>
<protein>
    <recommendedName>
        <fullName>Peptidyl-prolyl cis-trans isomerase ssp-1</fullName>
        <shortName>PPIase ssp-1</shortName>
        <ecNumber>5.2.1.8</ecNumber>
    </recommendedName>
</protein>
<dbReference type="EC" id="5.2.1.8"/>
<dbReference type="EMBL" id="AJ006023">
    <property type="protein sequence ID" value="CAA06818.1"/>
    <property type="molecule type" value="mRNA"/>
</dbReference>
<dbReference type="EMBL" id="CM002238">
    <property type="protein sequence ID" value="EAA33800.2"/>
    <property type="molecule type" value="Genomic_DNA"/>
</dbReference>
<dbReference type="RefSeq" id="XP_963036.2">
    <property type="nucleotide sequence ID" value="XM_957943.3"/>
</dbReference>
<dbReference type="SMR" id="O60045"/>
<dbReference type="FunCoup" id="O60045">
    <property type="interactions" value="950"/>
</dbReference>
<dbReference type="STRING" id="367110.O60045"/>
<dbReference type="PaxDb" id="5141-EFNCRP00000004618"/>
<dbReference type="EnsemblFungi" id="EAA33800">
    <property type="protein sequence ID" value="EAA33800"/>
    <property type="gene ID" value="NCU08554"/>
</dbReference>
<dbReference type="GeneID" id="3879175"/>
<dbReference type="KEGG" id="ncr:NCU08554"/>
<dbReference type="VEuPathDB" id="FungiDB:NCU08554"/>
<dbReference type="HOGENOM" id="CLU_090028_0_0_1"/>
<dbReference type="InParanoid" id="O60045"/>
<dbReference type="OMA" id="DEVQCLH"/>
<dbReference type="OrthoDB" id="2530521at2759"/>
<dbReference type="Proteomes" id="UP000001805">
    <property type="component" value="Chromosome 3, Linkage Group III"/>
</dbReference>
<dbReference type="GO" id="GO:0005829">
    <property type="term" value="C:cytosol"/>
    <property type="evidence" value="ECO:0000318"/>
    <property type="project" value="GO_Central"/>
</dbReference>
<dbReference type="GO" id="GO:0005634">
    <property type="term" value="C:nucleus"/>
    <property type="evidence" value="ECO:0000318"/>
    <property type="project" value="GO_Central"/>
</dbReference>
<dbReference type="GO" id="GO:0003755">
    <property type="term" value="F:peptidyl-prolyl cis-trans isomerase activity"/>
    <property type="evidence" value="ECO:0000318"/>
    <property type="project" value="GO_Central"/>
</dbReference>
<dbReference type="GO" id="GO:0060255">
    <property type="term" value="P:regulation of macromolecule metabolic process"/>
    <property type="evidence" value="ECO:0007669"/>
    <property type="project" value="UniProtKB-ARBA"/>
</dbReference>
<dbReference type="GO" id="GO:0080090">
    <property type="term" value="P:regulation of primary metabolic process"/>
    <property type="evidence" value="ECO:0007669"/>
    <property type="project" value="UniProtKB-ARBA"/>
</dbReference>
<dbReference type="CDD" id="cd00201">
    <property type="entry name" value="WW"/>
    <property type="match status" value="1"/>
</dbReference>
<dbReference type="FunFam" id="2.20.70.10:FF:000066">
    <property type="entry name" value="Peptidyl-prolyl cis-trans isomerase"/>
    <property type="match status" value="1"/>
</dbReference>
<dbReference type="FunFam" id="3.10.50.40:FF:000026">
    <property type="entry name" value="Peptidyl-prolyl cis-trans isomerase"/>
    <property type="match status" value="1"/>
</dbReference>
<dbReference type="Gene3D" id="2.20.70.10">
    <property type="match status" value="1"/>
</dbReference>
<dbReference type="Gene3D" id="3.10.50.40">
    <property type="match status" value="1"/>
</dbReference>
<dbReference type="InterPro" id="IPR046357">
    <property type="entry name" value="PPIase_dom_sf"/>
</dbReference>
<dbReference type="InterPro" id="IPR051370">
    <property type="entry name" value="PPIase_Pin1"/>
</dbReference>
<dbReference type="InterPro" id="IPR000297">
    <property type="entry name" value="PPIase_PpiC"/>
</dbReference>
<dbReference type="InterPro" id="IPR001202">
    <property type="entry name" value="WW_dom"/>
</dbReference>
<dbReference type="InterPro" id="IPR036020">
    <property type="entry name" value="WW_dom_sf"/>
</dbReference>
<dbReference type="PANTHER" id="PTHR10657">
    <property type="entry name" value="PEPTIDYL-PROLYL CIS-TRANS ISOMERASE"/>
    <property type="match status" value="1"/>
</dbReference>
<dbReference type="PANTHER" id="PTHR10657:SF4">
    <property type="entry name" value="PEPTIDYL-PROLYL CIS-TRANS ISOMERASE-RELATED"/>
    <property type="match status" value="1"/>
</dbReference>
<dbReference type="Pfam" id="PF00639">
    <property type="entry name" value="Rotamase"/>
    <property type="match status" value="1"/>
</dbReference>
<dbReference type="Pfam" id="PF00397">
    <property type="entry name" value="WW"/>
    <property type="match status" value="1"/>
</dbReference>
<dbReference type="SMART" id="SM00456">
    <property type="entry name" value="WW"/>
    <property type="match status" value="1"/>
</dbReference>
<dbReference type="SUPFAM" id="SSF54534">
    <property type="entry name" value="FKBP-like"/>
    <property type="match status" value="1"/>
</dbReference>
<dbReference type="SUPFAM" id="SSF51045">
    <property type="entry name" value="WW domain"/>
    <property type="match status" value="1"/>
</dbReference>
<dbReference type="PROSITE" id="PS50198">
    <property type="entry name" value="PPIC_PPIASE_2"/>
    <property type="match status" value="1"/>
</dbReference>
<dbReference type="PROSITE" id="PS01159">
    <property type="entry name" value="WW_DOMAIN_1"/>
    <property type="match status" value="1"/>
</dbReference>
<dbReference type="PROSITE" id="PS50020">
    <property type="entry name" value="WW_DOMAIN_2"/>
    <property type="match status" value="1"/>
</dbReference>
<accession>O60045</accession>
<accession>Q7RVY7</accession>